<protein>
    <recommendedName>
        <fullName evidence="1">tRNA (guanine-N(1)-)-methyltransferase</fullName>
        <ecNumber evidence="1">2.1.1.228</ecNumber>
    </recommendedName>
    <alternativeName>
        <fullName evidence="1">M1G-methyltransferase</fullName>
    </alternativeName>
    <alternativeName>
        <fullName evidence="1">tRNA [GM37] methyltransferase</fullName>
    </alternativeName>
</protein>
<reference key="1">
    <citation type="journal article" date="2005" name="Nat. Biotechnol.">
        <title>Complete genome sequence of the acetic acid bacterium Gluconobacter oxydans.</title>
        <authorList>
            <person name="Prust C."/>
            <person name="Hoffmeister M."/>
            <person name="Liesegang H."/>
            <person name="Wiezer A."/>
            <person name="Fricke W.F."/>
            <person name="Ehrenreich A."/>
            <person name="Gottschalk G."/>
            <person name="Deppenmeier U."/>
        </authorList>
    </citation>
    <scope>NUCLEOTIDE SEQUENCE [LARGE SCALE GENOMIC DNA]</scope>
    <source>
        <strain>621H</strain>
    </source>
</reference>
<name>TRMD_GLUOX</name>
<sequence length="234" mass="25539">MSWRADILTLFPNMFPGPLGFSLAGRALERGIWSCEAHDLRQHGLGRHRAVDDTPFGGGAGMVMRADVLDTALSALPALDGRPVVYPTPRGRRISHEDAERLSSGPGVVVLCGRFEGVDERVLEKHDIEQLCMGDVVLSGGEIPALTLLDACVRLLPGVMGSDVSGQDESFADGLLEYPQYTKPAVWDGRDVPDILLSGNHGAIARWRHEQSIAVTKARRPDLWDAYLARQQVH</sequence>
<proteinExistence type="inferred from homology"/>
<evidence type="ECO:0000255" key="1">
    <source>
        <dbReference type="HAMAP-Rule" id="MF_00605"/>
    </source>
</evidence>
<dbReference type="EC" id="2.1.1.228" evidence="1"/>
<dbReference type="EMBL" id="CP000009">
    <property type="protein sequence ID" value="AAW59985.1"/>
    <property type="molecule type" value="Genomic_DNA"/>
</dbReference>
<dbReference type="RefSeq" id="WP_011251788.1">
    <property type="nucleotide sequence ID" value="NC_006677.1"/>
</dbReference>
<dbReference type="SMR" id="Q5FUG1"/>
<dbReference type="STRING" id="290633.GOX0195"/>
<dbReference type="KEGG" id="gox:GOX0195"/>
<dbReference type="eggNOG" id="COG0336">
    <property type="taxonomic scope" value="Bacteria"/>
</dbReference>
<dbReference type="HOGENOM" id="CLU_047363_0_1_5"/>
<dbReference type="Proteomes" id="UP000006375">
    <property type="component" value="Chromosome"/>
</dbReference>
<dbReference type="GO" id="GO:0005829">
    <property type="term" value="C:cytosol"/>
    <property type="evidence" value="ECO:0007669"/>
    <property type="project" value="TreeGrafter"/>
</dbReference>
<dbReference type="GO" id="GO:0052906">
    <property type="term" value="F:tRNA (guanine(37)-N1)-methyltransferase activity"/>
    <property type="evidence" value="ECO:0007669"/>
    <property type="project" value="UniProtKB-UniRule"/>
</dbReference>
<dbReference type="GO" id="GO:0002939">
    <property type="term" value="P:tRNA N1-guanine methylation"/>
    <property type="evidence" value="ECO:0007669"/>
    <property type="project" value="TreeGrafter"/>
</dbReference>
<dbReference type="CDD" id="cd18080">
    <property type="entry name" value="TrmD-like"/>
    <property type="match status" value="1"/>
</dbReference>
<dbReference type="FunFam" id="1.10.1270.20:FF:000001">
    <property type="entry name" value="tRNA (guanine-N(1)-)-methyltransferase"/>
    <property type="match status" value="1"/>
</dbReference>
<dbReference type="Gene3D" id="3.40.1280.10">
    <property type="match status" value="1"/>
</dbReference>
<dbReference type="Gene3D" id="1.10.1270.20">
    <property type="entry name" value="tRNA(m1g37)methyltransferase, domain 2"/>
    <property type="match status" value="1"/>
</dbReference>
<dbReference type="HAMAP" id="MF_00605">
    <property type="entry name" value="TrmD"/>
    <property type="match status" value="1"/>
</dbReference>
<dbReference type="InterPro" id="IPR029028">
    <property type="entry name" value="Alpha/beta_knot_MTases"/>
</dbReference>
<dbReference type="InterPro" id="IPR023148">
    <property type="entry name" value="tRNA_m1G_MeTrfase_C_sf"/>
</dbReference>
<dbReference type="InterPro" id="IPR002649">
    <property type="entry name" value="tRNA_m1G_MeTrfase_TrmD"/>
</dbReference>
<dbReference type="InterPro" id="IPR029026">
    <property type="entry name" value="tRNA_m1G_MTases_N"/>
</dbReference>
<dbReference type="InterPro" id="IPR016009">
    <property type="entry name" value="tRNA_MeTrfase_TRMD/TRM10"/>
</dbReference>
<dbReference type="NCBIfam" id="NF000648">
    <property type="entry name" value="PRK00026.1"/>
    <property type="match status" value="1"/>
</dbReference>
<dbReference type="NCBIfam" id="TIGR00088">
    <property type="entry name" value="trmD"/>
    <property type="match status" value="1"/>
</dbReference>
<dbReference type="PANTHER" id="PTHR46417">
    <property type="entry name" value="TRNA (GUANINE-N(1)-)-METHYLTRANSFERASE"/>
    <property type="match status" value="1"/>
</dbReference>
<dbReference type="PANTHER" id="PTHR46417:SF1">
    <property type="entry name" value="TRNA (GUANINE-N(1)-)-METHYLTRANSFERASE"/>
    <property type="match status" value="1"/>
</dbReference>
<dbReference type="Pfam" id="PF01746">
    <property type="entry name" value="tRNA_m1G_MT"/>
    <property type="match status" value="1"/>
</dbReference>
<dbReference type="PIRSF" id="PIRSF000386">
    <property type="entry name" value="tRNA_mtase"/>
    <property type="match status" value="1"/>
</dbReference>
<dbReference type="SUPFAM" id="SSF75217">
    <property type="entry name" value="alpha/beta knot"/>
    <property type="match status" value="1"/>
</dbReference>
<accession>Q5FUG1</accession>
<gene>
    <name evidence="1" type="primary">trmD</name>
    <name type="ordered locus">GOX0195</name>
</gene>
<comment type="function">
    <text evidence="1">Specifically methylates guanosine-37 in various tRNAs.</text>
</comment>
<comment type="catalytic activity">
    <reaction evidence="1">
        <text>guanosine(37) in tRNA + S-adenosyl-L-methionine = N(1)-methylguanosine(37) in tRNA + S-adenosyl-L-homocysteine + H(+)</text>
        <dbReference type="Rhea" id="RHEA:36899"/>
        <dbReference type="Rhea" id="RHEA-COMP:10145"/>
        <dbReference type="Rhea" id="RHEA-COMP:10147"/>
        <dbReference type="ChEBI" id="CHEBI:15378"/>
        <dbReference type="ChEBI" id="CHEBI:57856"/>
        <dbReference type="ChEBI" id="CHEBI:59789"/>
        <dbReference type="ChEBI" id="CHEBI:73542"/>
        <dbReference type="ChEBI" id="CHEBI:74269"/>
        <dbReference type="EC" id="2.1.1.228"/>
    </reaction>
</comment>
<comment type="subunit">
    <text evidence="1">Homodimer.</text>
</comment>
<comment type="subcellular location">
    <subcellularLocation>
        <location evidence="1">Cytoplasm</location>
    </subcellularLocation>
</comment>
<comment type="similarity">
    <text evidence="1">Belongs to the RNA methyltransferase TrmD family.</text>
</comment>
<keyword id="KW-0963">Cytoplasm</keyword>
<keyword id="KW-0489">Methyltransferase</keyword>
<keyword id="KW-1185">Reference proteome</keyword>
<keyword id="KW-0949">S-adenosyl-L-methionine</keyword>
<keyword id="KW-0808">Transferase</keyword>
<keyword id="KW-0819">tRNA processing</keyword>
<organism>
    <name type="scientific">Gluconobacter oxydans (strain 621H)</name>
    <name type="common">Gluconobacter suboxydans</name>
    <dbReference type="NCBI Taxonomy" id="290633"/>
    <lineage>
        <taxon>Bacteria</taxon>
        <taxon>Pseudomonadati</taxon>
        <taxon>Pseudomonadota</taxon>
        <taxon>Alphaproteobacteria</taxon>
        <taxon>Acetobacterales</taxon>
        <taxon>Acetobacteraceae</taxon>
        <taxon>Gluconobacter</taxon>
    </lineage>
</organism>
<feature type="chain" id="PRO_0000060383" description="tRNA (guanine-N(1)-)-methyltransferase">
    <location>
        <begin position="1"/>
        <end position="234"/>
    </location>
</feature>
<feature type="binding site" evidence="1">
    <location>
        <position position="113"/>
    </location>
    <ligand>
        <name>S-adenosyl-L-methionine</name>
        <dbReference type="ChEBI" id="CHEBI:59789"/>
    </ligand>
</feature>